<dbReference type="EMBL" id="CP001657">
    <property type="protein sequence ID" value="ACT14226.1"/>
    <property type="molecule type" value="Genomic_DNA"/>
</dbReference>
<dbReference type="RefSeq" id="WP_015841363.1">
    <property type="nucleotide sequence ID" value="NC_012917.1"/>
</dbReference>
<dbReference type="SMR" id="C6DCQ1"/>
<dbReference type="STRING" id="561230.PC1_3203"/>
<dbReference type="GeneID" id="67792994"/>
<dbReference type="KEGG" id="pct:PC1_3203"/>
<dbReference type="eggNOG" id="COG0228">
    <property type="taxonomic scope" value="Bacteria"/>
</dbReference>
<dbReference type="HOGENOM" id="CLU_100590_5_1_6"/>
<dbReference type="OrthoDB" id="9807878at2"/>
<dbReference type="Proteomes" id="UP000002736">
    <property type="component" value="Chromosome"/>
</dbReference>
<dbReference type="GO" id="GO:0005737">
    <property type="term" value="C:cytoplasm"/>
    <property type="evidence" value="ECO:0007669"/>
    <property type="project" value="UniProtKB-ARBA"/>
</dbReference>
<dbReference type="GO" id="GO:0015935">
    <property type="term" value="C:small ribosomal subunit"/>
    <property type="evidence" value="ECO:0007669"/>
    <property type="project" value="TreeGrafter"/>
</dbReference>
<dbReference type="GO" id="GO:0003735">
    <property type="term" value="F:structural constituent of ribosome"/>
    <property type="evidence" value="ECO:0007669"/>
    <property type="project" value="InterPro"/>
</dbReference>
<dbReference type="GO" id="GO:0006412">
    <property type="term" value="P:translation"/>
    <property type="evidence" value="ECO:0007669"/>
    <property type="project" value="UniProtKB-UniRule"/>
</dbReference>
<dbReference type="FunFam" id="3.30.1320.10:FF:000001">
    <property type="entry name" value="30S ribosomal protein S16"/>
    <property type="match status" value="1"/>
</dbReference>
<dbReference type="Gene3D" id="3.30.1320.10">
    <property type="match status" value="1"/>
</dbReference>
<dbReference type="HAMAP" id="MF_00385">
    <property type="entry name" value="Ribosomal_bS16"/>
    <property type="match status" value="1"/>
</dbReference>
<dbReference type="InterPro" id="IPR000307">
    <property type="entry name" value="Ribosomal_bS16"/>
</dbReference>
<dbReference type="InterPro" id="IPR020592">
    <property type="entry name" value="Ribosomal_bS16_CS"/>
</dbReference>
<dbReference type="InterPro" id="IPR023803">
    <property type="entry name" value="Ribosomal_bS16_dom_sf"/>
</dbReference>
<dbReference type="NCBIfam" id="TIGR00002">
    <property type="entry name" value="S16"/>
    <property type="match status" value="1"/>
</dbReference>
<dbReference type="PANTHER" id="PTHR12919">
    <property type="entry name" value="30S RIBOSOMAL PROTEIN S16"/>
    <property type="match status" value="1"/>
</dbReference>
<dbReference type="PANTHER" id="PTHR12919:SF20">
    <property type="entry name" value="SMALL RIBOSOMAL SUBUNIT PROTEIN BS16M"/>
    <property type="match status" value="1"/>
</dbReference>
<dbReference type="Pfam" id="PF00886">
    <property type="entry name" value="Ribosomal_S16"/>
    <property type="match status" value="1"/>
</dbReference>
<dbReference type="SUPFAM" id="SSF54565">
    <property type="entry name" value="Ribosomal protein S16"/>
    <property type="match status" value="1"/>
</dbReference>
<dbReference type="PROSITE" id="PS00732">
    <property type="entry name" value="RIBOSOMAL_S16"/>
    <property type="match status" value="1"/>
</dbReference>
<evidence type="ECO:0000255" key="1">
    <source>
        <dbReference type="HAMAP-Rule" id="MF_00385"/>
    </source>
</evidence>
<evidence type="ECO:0000305" key="2"/>
<accession>C6DCQ1</accession>
<reference key="1">
    <citation type="submission" date="2009-07" db="EMBL/GenBank/DDBJ databases">
        <title>Complete sequence of Pectobacterium carotovorum subsp. carotovorum PC1.</title>
        <authorList>
            <consortium name="US DOE Joint Genome Institute"/>
            <person name="Lucas S."/>
            <person name="Copeland A."/>
            <person name="Lapidus A."/>
            <person name="Glavina del Rio T."/>
            <person name="Tice H."/>
            <person name="Bruce D."/>
            <person name="Goodwin L."/>
            <person name="Pitluck S."/>
            <person name="Munk A.C."/>
            <person name="Brettin T."/>
            <person name="Detter J.C."/>
            <person name="Han C."/>
            <person name="Tapia R."/>
            <person name="Larimer F."/>
            <person name="Land M."/>
            <person name="Hauser L."/>
            <person name="Kyrpides N."/>
            <person name="Mikhailova N."/>
            <person name="Balakrishnan V."/>
            <person name="Glasner J."/>
            <person name="Perna N.T."/>
        </authorList>
    </citation>
    <scope>NUCLEOTIDE SEQUENCE [LARGE SCALE GENOMIC DNA]</scope>
    <source>
        <strain>PC1</strain>
    </source>
</reference>
<name>RS16_PECCP</name>
<gene>
    <name evidence="1" type="primary">rpsP</name>
    <name type="ordered locus">PC1_3203</name>
</gene>
<protein>
    <recommendedName>
        <fullName evidence="1">Small ribosomal subunit protein bS16</fullName>
    </recommendedName>
    <alternativeName>
        <fullName evidence="2">30S ribosomal protein S16</fullName>
    </alternativeName>
</protein>
<sequence>MVTIRLARGGAKKRPFYQVVVTDSRNARDGRFIERVGFFNPIAAGQAEALRLDLDRIEHWLGLGATVSDRVSSLIKDAKKAA</sequence>
<keyword id="KW-0687">Ribonucleoprotein</keyword>
<keyword id="KW-0689">Ribosomal protein</keyword>
<comment type="similarity">
    <text evidence="1">Belongs to the bacterial ribosomal protein bS16 family.</text>
</comment>
<proteinExistence type="inferred from homology"/>
<organism>
    <name type="scientific">Pectobacterium carotovorum subsp. carotovorum (strain PC1)</name>
    <dbReference type="NCBI Taxonomy" id="561230"/>
    <lineage>
        <taxon>Bacteria</taxon>
        <taxon>Pseudomonadati</taxon>
        <taxon>Pseudomonadota</taxon>
        <taxon>Gammaproteobacteria</taxon>
        <taxon>Enterobacterales</taxon>
        <taxon>Pectobacteriaceae</taxon>
        <taxon>Pectobacterium</taxon>
    </lineage>
</organism>
<feature type="chain" id="PRO_1000205768" description="Small ribosomal subunit protein bS16">
    <location>
        <begin position="1"/>
        <end position="82"/>
    </location>
</feature>